<reference key="1">
    <citation type="journal article" date="2006" name="J. Bacteriol.">
        <title>Complete genome sequence of Yersinia pestis strains Antiqua and Nepal516: evidence of gene reduction in an emerging pathogen.</title>
        <authorList>
            <person name="Chain P.S.G."/>
            <person name="Hu P."/>
            <person name="Malfatti S.A."/>
            <person name="Radnedge L."/>
            <person name="Larimer F."/>
            <person name="Vergez L.M."/>
            <person name="Worsham P."/>
            <person name="Chu M.C."/>
            <person name="Andersen G.L."/>
        </authorList>
    </citation>
    <scope>NUCLEOTIDE SEQUENCE [LARGE SCALE GENOMIC DNA]</scope>
    <source>
        <strain>Antiqua</strain>
    </source>
</reference>
<comment type="function">
    <text evidence="1">Involved in mRNA degradation. Catalyzes the phosphorolysis of single-stranded polyribonucleotides processively in the 3'- to 5'-direction.</text>
</comment>
<comment type="catalytic activity">
    <reaction evidence="1">
        <text>RNA(n+1) + phosphate = RNA(n) + a ribonucleoside 5'-diphosphate</text>
        <dbReference type="Rhea" id="RHEA:22096"/>
        <dbReference type="Rhea" id="RHEA-COMP:14527"/>
        <dbReference type="Rhea" id="RHEA-COMP:17342"/>
        <dbReference type="ChEBI" id="CHEBI:43474"/>
        <dbReference type="ChEBI" id="CHEBI:57930"/>
        <dbReference type="ChEBI" id="CHEBI:140395"/>
        <dbReference type="EC" id="2.7.7.8"/>
    </reaction>
</comment>
<comment type="cofactor">
    <cofactor evidence="1">
        <name>Mg(2+)</name>
        <dbReference type="ChEBI" id="CHEBI:18420"/>
    </cofactor>
</comment>
<comment type="subunit">
    <text evidence="1">Component of the RNA degradosome, which is a multiprotein complex involved in RNA processing and mRNA degradation.</text>
</comment>
<comment type="subcellular location">
    <subcellularLocation>
        <location evidence="1">Cytoplasm</location>
    </subcellularLocation>
</comment>
<comment type="similarity">
    <text evidence="1">Belongs to the polyribonucleotide nucleotidyltransferase family.</text>
</comment>
<comment type="sequence caution" evidence="2">
    <conflict type="erroneous initiation">
        <sequence resource="EMBL-CDS" id="ABG14954"/>
    </conflict>
</comment>
<proteinExistence type="inferred from homology"/>
<name>PNP_YERPA</name>
<sequence>MLTPIIRKFQYGQHTVTIETGMMARQATAAVMVSMDDTAVFVTVVGQKKAKPGQSFFPLTVNYQERTYAAGRIPGSFFRREGRPSEGETLTSRLIDRPIRPLFPDSFLNEVQVIATVVSVNPQINPDIVALIGASAALSLSGIPFNGPIGAARVGFINDQYVLNPTTDELKESRLDLVVAGTAGAVLMVESEADILSEEQMLGAVVFGHEQQQVVIENINALVAEAGKPKWDWQAEPVNEALHARVAELAEARLGDAYRITEKQERYTQVDAIKADVTEALLAQDDTLDAAEIQDILASVEKNVVRSRVLRGEPRIDGREKDMIRGLDVRTGILPRTHGSALFTRGETQALVTATLGTARDAQNIDELMGERTDSFLLHYNFPPYCVGETGMVGSPKRREIGHGRLAKRGVLAVMPSASEFPYTIRVVSEITESNGSSSMASVCGASLALMDAGVPIKAAVAGIAMGLVKEGDNFVVLSDILGDEDHLGDMDFKVAGSRDGVTALQMDIKIEGITREIMQVALNQAKGARLHILGVMEQAISTPRGDISEFAPRIYTMKINPEKIKDVIGKGGSVIRALTDETGTTIEIEDDGTIKIAATDGDKAKHAIRRIEEITAEIEVGRIYAGKVTRIVDFGAFVAIGGGKEGLVHISQIADKRVEKVTDYLQMGQDVPVKVMEVDRQGRIRLSIKEATTPDAEAPEAAAE</sequence>
<dbReference type="EC" id="2.7.7.8" evidence="1"/>
<dbReference type="EMBL" id="CP000308">
    <property type="protein sequence ID" value="ABG14954.1"/>
    <property type="status" value="ALT_INIT"/>
    <property type="molecule type" value="Genomic_DNA"/>
</dbReference>
<dbReference type="RefSeq" id="WP_002209259.1">
    <property type="nucleotide sequence ID" value="NZ_CP009906.1"/>
</dbReference>
<dbReference type="SMR" id="Q1C3L8"/>
<dbReference type="GeneID" id="57975224"/>
<dbReference type="KEGG" id="ypa:YPA_2992"/>
<dbReference type="Proteomes" id="UP000001971">
    <property type="component" value="Chromosome"/>
</dbReference>
<dbReference type="GO" id="GO:0005829">
    <property type="term" value="C:cytosol"/>
    <property type="evidence" value="ECO:0007669"/>
    <property type="project" value="TreeGrafter"/>
</dbReference>
<dbReference type="GO" id="GO:0000175">
    <property type="term" value="F:3'-5'-RNA exonuclease activity"/>
    <property type="evidence" value="ECO:0007669"/>
    <property type="project" value="TreeGrafter"/>
</dbReference>
<dbReference type="GO" id="GO:0000287">
    <property type="term" value="F:magnesium ion binding"/>
    <property type="evidence" value="ECO:0007669"/>
    <property type="project" value="UniProtKB-UniRule"/>
</dbReference>
<dbReference type="GO" id="GO:0004654">
    <property type="term" value="F:polyribonucleotide nucleotidyltransferase activity"/>
    <property type="evidence" value="ECO:0007669"/>
    <property type="project" value="UniProtKB-UniRule"/>
</dbReference>
<dbReference type="GO" id="GO:0003723">
    <property type="term" value="F:RNA binding"/>
    <property type="evidence" value="ECO:0007669"/>
    <property type="project" value="UniProtKB-UniRule"/>
</dbReference>
<dbReference type="GO" id="GO:0006402">
    <property type="term" value="P:mRNA catabolic process"/>
    <property type="evidence" value="ECO:0007669"/>
    <property type="project" value="UniProtKB-UniRule"/>
</dbReference>
<dbReference type="GO" id="GO:0006396">
    <property type="term" value="P:RNA processing"/>
    <property type="evidence" value="ECO:0007669"/>
    <property type="project" value="InterPro"/>
</dbReference>
<dbReference type="CDD" id="cd02393">
    <property type="entry name" value="KH-I_PNPase"/>
    <property type="match status" value="1"/>
</dbReference>
<dbReference type="CDD" id="cd11363">
    <property type="entry name" value="RNase_PH_PNPase_1"/>
    <property type="match status" value="1"/>
</dbReference>
<dbReference type="CDD" id="cd11364">
    <property type="entry name" value="RNase_PH_PNPase_2"/>
    <property type="match status" value="1"/>
</dbReference>
<dbReference type="CDD" id="cd04472">
    <property type="entry name" value="S1_PNPase"/>
    <property type="match status" value="1"/>
</dbReference>
<dbReference type="FunFam" id="2.40.50.140:FF:000023">
    <property type="entry name" value="Polyribonucleotide nucleotidyltransferase"/>
    <property type="match status" value="1"/>
</dbReference>
<dbReference type="FunFam" id="3.30.1370.10:FF:000001">
    <property type="entry name" value="Polyribonucleotide nucleotidyltransferase"/>
    <property type="match status" value="1"/>
</dbReference>
<dbReference type="FunFam" id="3.30.230.70:FF:000001">
    <property type="entry name" value="Polyribonucleotide nucleotidyltransferase"/>
    <property type="match status" value="1"/>
</dbReference>
<dbReference type="FunFam" id="3.30.230.70:FF:000002">
    <property type="entry name" value="Polyribonucleotide nucleotidyltransferase"/>
    <property type="match status" value="1"/>
</dbReference>
<dbReference type="Gene3D" id="3.30.230.70">
    <property type="entry name" value="GHMP Kinase, N-terminal domain"/>
    <property type="match status" value="2"/>
</dbReference>
<dbReference type="Gene3D" id="3.30.1370.10">
    <property type="entry name" value="K Homology domain, type 1"/>
    <property type="match status" value="1"/>
</dbReference>
<dbReference type="Gene3D" id="2.40.50.140">
    <property type="entry name" value="Nucleic acid-binding proteins"/>
    <property type="match status" value="1"/>
</dbReference>
<dbReference type="HAMAP" id="MF_01595">
    <property type="entry name" value="PNPase"/>
    <property type="match status" value="1"/>
</dbReference>
<dbReference type="InterPro" id="IPR001247">
    <property type="entry name" value="ExoRNase_PH_dom1"/>
</dbReference>
<dbReference type="InterPro" id="IPR015847">
    <property type="entry name" value="ExoRNase_PH_dom2"/>
</dbReference>
<dbReference type="InterPro" id="IPR036345">
    <property type="entry name" value="ExoRNase_PH_dom2_sf"/>
</dbReference>
<dbReference type="InterPro" id="IPR004087">
    <property type="entry name" value="KH_dom"/>
</dbReference>
<dbReference type="InterPro" id="IPR004088">
    <property type="entry name" value="KH_dom_type_1"/>
</dbReference>
<dbReference type="InterPro" id="IPR036612">
    <property type="entry name" value="KH_dom_type_1_sf"/>
</dbReference>
<dbReference type="InterPro" id="IPR012340">
    <property type="entry name" value="NA-bd_OB-fold"/>
</dbReference>
<dbReference type="InterPro" id="IPR012162">
    <property type="entry name" value="PNPase"/>
</dbReference>
<dbReference type="InterPro" id="IPR027408">
    <property type="entry name" value="PNPase/RNase_PH_dom_sf"/>
</dbReference>
<dbReference type="InterPro" id="IPR015848">
    <property type="entry name" value="PNPase_PH_RNA-bd_bac/org-type"/>
</dbReference>
<dbReference type="InterPro" id="IPR036456">
    <property type="entry name" value="PNPase_PH_RNA-bd_sf"/>
</dbReference>
<dbReference type="InterPro" id="IPR020568">
    <property type="entry name" value="Ribosomal_Su5_D2-typ_SF"/>
</dbReference>
<dbReference type="InterPro" id="IPR003029">
    <property type="entry name" value="S1_domain"/>
</dbReference>
<dbReference type="NCBIfam" id="TIGR03591">
    <property type="entry name" value="polynuc_phos"/>
    <property type="match status" value="1"/>
</dbReference>
<dbReference type="NCBIfam" id="NF008805">
    <property type="entry name" value="PRK11824.1"/>
    <property type="match status" value="1"/>
</dbReference>
<dbReference type="PANTHER" id="PTHR11252">
    <property type="entry name" value="POLYRIBONUCLEOTIDE NUCLEOTIDYLTRANSFERASE"/>
    <property type="match status" value="1"/>
</dbReference>
<dbReference type="PANTHER" id="PTHR11252:SF0">
    <property type="entry name" value="POLYRIBONUCLEOTIDE NUCLEOTIDYLTRANSFERASE 1, MITOCHONDRIAL"/>
    <property type="match status" value="1"/>
</dbReference>
<dbReference type="Pfam" id="PF00013">
    <property type="entry name" value="KH_1"/>
    <property type="match status" value="1"/>
</dbReference>
<dbReference type="Pfam" id="PF03726">
    <property type="entry name" value="PNPase"/>
    <property type="match status" value="1"/>
</dbReference>
<dbReference type="Pfam" id="PF01138">
    <property type="entry name" value="RNase_PH"/>
    <property type="match status" value="2"/>
</dbReference>
<dbReference type="Pfam" id="PF03725">
    <property type="entry name" value="RNase_PH_C"/>
    <property type="match status" value="2"/>
</dbReference>
<dbReference type="Pfam" id="PF00575">
    <property type="entry name" value="S1"/>
    <property type="match status" value="1"/>
</dbReference>
<dbReference type="PIRSF" id="PIRSF005499">
    <property type="entry name" value="PNPase"/>
    <property type="match status" value="1"/>
</dbReference>
<dbReference type="SMART" id="SM00322">
    <property type="entry name" value="KH"/>
    <property type="match status" value="1"/>
</dbReference>
<dbReference type="SMART" id="SM00316">
    <property type="entry name" value="S1"/>
    <property type="match status" value="1"/>
</dbReference>
<dbReference type="SUPFAM" id="SSF54791">
    <property type="entry name" value="Eukaryotic type KH-domain (KH-domain type I)"/>
    <property type="match status" value="1"/>
</dbReference>
<dbReference type="SUPFAM" id="SSF50249">
    <property type="entry name" value="Nucleic acid-binding proteins"/>
    <property type="match status" value="1"/>
</dbReference>
<dbReference type="SUPFAM" id="SSF46915">
    <property type="entry name" value="Polynucleotide phosphorylase/guanosine pentaphosphate synthase (PNPase/GPSI), domain 3"/>
    <property type="match status" value="1"/>
</dbReference>
<dbReference type="SUPFAM" id="SSF55666">
    <property type="entry name" value="Ribonuclease PH domain 2-like"/>
    <property type="match status" value="2"/>
</dbReference>
<dbReference type="SUPFAM" id="SSF54211">
    <property type="entry name" value="Ribosomal protein S5 domain 2-like"/>
    <property type="match status" value="2"/>
</dbReference>
<dbReference type="PROSITE" id="PS50084">
    <property type="entry name" value="KH_TYPE_1"/>
    <property type="match status" value="1"/>
</dbReference>
<dbReference type="PROSITE" id="PS50126">
    <property type="entry name" value="S1"/>
    <property type="match status" value="1"/>
</dbReference>
<gene>
    <name evidence="1" type="primary">pnp</name>
    <name type="ordered locus">YPA_2992</name>
</gene>
<accession>Q1C3L8</accession>
<keyword id="KW-0963">Cytoplasm</keyword>
<keyword id="KW-0460">Magnesium</keyword>
<keyword id="KW-0479">Metal-binding</keyword>
<keyword id="KW-0548">Nucleotidyltransferase</keyword>
<keyword id="KW-0694">RNA-binding</keyword>
<keyword id="KW-0808">Transferase</keyword>
<feature type="chain" id="PRO_0000329948" description="Polyribonucleotide nucleotidyltransferase">
    <location>
        <begin position="1"/>
        <end position="705"/>
    </location>
</feature>
<feature type="domain" description="KH" evidence="1">
    <location>
        <begin position="553"/>
        <end position="612"/>
    </location>
</feature>
<feature type="domain" description="S1 motif" evidence="1">
    <location>
        <begin position="622"/>
        <end position="690"/>
    </location>
</feature>
<feature type="binding site" evidence="1">
    <location>
        <position position="486"/>
    </location>
    <ligand>
        <name>Mg(2+)</name>
        <dbReference type="ChEBI" id="CHEBI:18420"/>
    </ligand>
</feature>
<feature type="binding site" evidence="1">
    <location>
        <position position="492"/>
    </location>
    <ligand>
        <name>Mg(2+)</name>
        <dbReference type="ChEBI" id="CHEBI:18420"/>
    </ligand>
</feature>
<organism>
    <name type="scientific">Yersinia pestis bv. Antiqua (strain Antiqua)</name>
    <dbReference type="NCBI Taxonomy" id="360102"/>
    <lineage>
        <taxon>Bacteria</taxon>
        <taxon>Pseudomonadati</taxon>
        <taxon>Pseudomonadota</taxon>
        <taxon>Gammaproteobacteria</taxon>
        <taxon>Enterobacterales</taxon>
        <taxon>Yersiniaceae</taxon>
        <taxon>Yersinia</taxon>
    </lineage>
</organism>
<protein>
    <recommendedName>
        <fullName evidence="1">Polyribonucleotide nucleotidyltransferase</fullName>
        <ecNumber evidence="1">2.7.7.8</ecNumber>
    </recommendedName>
    <alternativeName>
        <fullName evidence="1">Polynucleotide phosphorylase</fullName>
        <shortName evidence="1">PNPase</shortName>
    </alternativeName>
</protein>
<evidence type="ECO:0000255" key="1">
    <source>
        <dbReference type="HAMAP-Rule" id="MF_01595"/>
    </source>
</evidence>
<evidence type="ECO:0000305" key="2"/>